<proteinExistence type="evidence at protein level"/>
<sequence length="97" mass="11313">MASYHVSHDSYQSPGPSPLYQPIIEAPPPPYPPTRTRYQDYYGGYGQPHPPPLRPYRSDHEYYGDGEYVGCFPFLRSCLTTLCCCWFVEQCCFRSRY</sequence>
<name>CSTM7_ARATH</name>
<protein>
    <recommendedName>
        <fullName evidence="4">Protein CYSTEINE-RICH TRANSMEMBRANE MODULE 7</fullName>
        <shortName evidence="4">AthCYSTM7</shortName>
    </recommendedName>
</protein>
<reference key="1">
    <citation type="journal article" date="1999" name="Nature">
        <title>Sequence and analysis of chromosome 2 of the plant Arabidopsis thaliana.</title>
        <authorList>
            <person name="Lin X."/>
            <person name="Kaul S."/>
            <person name="Rounsley S.D."/>
            <person name="Shea T.P."/>
            <person name="Benito M.-I."/>
            <person name="Town C.D."/>
            <person name="Fujii C.Y."/>
            <person name="Mason T.M."/>
            <person name="Bowman C.L."/>
            <person name="Barnstead M.E."/>
            <person name="Feldblyum T.V."/>
            <person name="Buell C.R."/>
            <person name="Ketchum K.A."/>
            <person name="Lee J.J."/>
            <person name="Ronning C.M."/>
            <person name="Koo H.L."/>
            <person name="Moffat K.S."/>
            <person name="Cronin L.A."/>
            <person name="Shen M."/>
            <person name="Pai G."/>
            <person name="Van Aken S."/>
            <person name="Umayam L."/>
            <person name="Tallon L.J."/>
            <person name="Gill J.E."/>
            <person name="Adams M.D."/>
            <person name="Carrera A.J."/>
            <person name="Creasy T.H."/>
            <person name="Goodman H.M."/>
            <person name="Somerville C.R."/>
            <person name="Copenhaver G.P."/>
            <person name="Preuss D."/>
            <person name="Nierman W.C."/>
            <person name="White O."/>
            <person name="Eisen J.A."/>
            <person name="Salzberg S.L."/>
            <person name="Fraser C.M."/>
            <person name="Venter J.C."/>
        </authorList>
    </citation>
    <scope>NUCLEOTIDE SEQUENCE [LARGE SCALE GENOMIC DNA]</scope>
    <source>
        <strain>cv. Columbia</strain>
    </source>
</reference>
<reference key="2">
    <citation type="journal article" date="2017" name="Plant J.">
        <title>Araport11: a complete reannotation of the Arabidopsis thaliana reference genome.</title>
        <authorList>
            <person name="Cheng C.Y."/>
            <person name="Krishnakumar V."/>
            <person name="Chan A.P."/>
            <person name="Thibaud-Nissen F."/>
            <person name="Schobel S."/>
            <person name="Town C.D."/>
        </authorList>
    </citation>
    <scope>GENOME REANNOTATION</scope>
    <source>
        <strain>cv. Columbia</strain>
    </source>
</reference>
<reference key="3">
    <citation type="submission" date="2004-01" db="EMBL/GenBank/DDBJ databases">
        <title>Arabidopsis ORF clones.</title>
        <authorList>
            <person name="Cheuk R.F."/>
            <person name="Chen H."/>
            <person name="Kim C.J."/>
            <person name="Shinn P."/>
            <person name="Ecker J.R."/>
        </authorList>
    </citation>
    <scope>NUCLEOTIDE SEQUENCE [LARGE SCALE MRNA]</scope>
    <source>
        <strain>cv. Columbia</strain>
    </source>
</reference>
<reference key="4">
    <citation type="journal article" date="2018" name="Plant Cell Physiol.">
        <title>CYSTM, a novel non-secreted cysteine-rich peptide family, involved in environmental stresses in Arabidopsis thaliana.</title>
        <authorList>
            <person name="Xu Y."/>
            <person name="Yu Z."/>
            <person name="Zhang D."/>
            <person name="Huang J."/>
            <person name="Wu C."/>
            <person name="Yang G."/>
            <person name="Yan K."/>
            <person name="Zhang S."/>
            <person name="Zheng C."/>
        </authorList>
    </citation>
    <scope>FUNCTION</scope>
    <scope>HOMODIMERIZATION</scope>
    <scope>INTERACTION WITH CYSTM3; CYSTM4; CYSTM5; CYSTM6; CYSTM10; WIH1/CYSTM13; CYSTM11; CYSTM1; CYSTM2 AND CYSTM12</scope>
    <scope>TISSUE SPECIFICITY</scope>
    <scope>INDUCTION BY SALT; HEAT AND DROUGHT</scope>
    <scope>SUBCELLULAR LOCATION</scope>
    <source>
        <strain>cv. Columbia</strain>
    </source>
</reference>
<evidence type="ECO:0000255" key="1"/>
<evidence type="ECO:0000256" key="2">
    <source>
        <dbReference type="SAM" id="MobiDB-lite"/>
    </source>
</evidence>
<evidence type="ECO:0000269" key="3">
    <source>
    </source>
</evidence>
<evidence type="ECO:0000303" key="4">
    <source>
    </source>
</evidence>
<evidence type="ECO:0000305" key="5"/>
<evidence type="ECO:0000312" key="6">
    <source>
        <dbReference type="Araport" id="AT2G33520"/>
    </source>
</evidence>
<evidence type="ECO:0000312" key="7">
    <source>
        <dbReference type="EMBL" id="AAB80669.1"/>
    </source>
</evidence>
<dbReference type="EMBL" id="AC002332">
    <property type="protein sequence ID" value="AAB80669.1"/>
    <property type="molecule type" value="Genomic_DNA"/>
</dbReference>
<dbReference type="EMBL" id="CP002685">
    <property type="protein sequence ID" value="AEC08848.1"/>
    <property type="molecule type" value="Genomic_DNA"/>
</dbReference>
<dbReference type="EMBL" id="BT010807">
    <property type="protein sequence ID" value="AAR24174.1"/>
    <property type="molecule type" value="mRNA"/>
</dbReference>
<dbReference type="EMBL" id="BT011286">
    <property type="protein sequence ID" value="AAR92322.1"/>
    <property type="molecule type" value="mRNA"/>
</dbReference>
<dbReference type="PIR" id="E84746">
    <property type="entry name" value="E84746"/>
</dbReference>
<dbReference type="RefSeq" id="NP_180910.1">
    <property type="nucleotide sequence ID" value="NM_128912.2"/>
</dbReference>
<dbReference type="IntAct" id="O22802">
    <property type="interactions" value="1"/>
</dbReference>
<dbReference type="PaxDb" id="3702-AT2G33520.1"/>
<dbReference type="ProteomicsDB" id="193603"/>
<dbReference type="EnsemblPlants" id="AT2G33520.1">
    <property type="protein sequence ID" value="AT2G33520.1"/>
    <property type="gene ID" value="AT2G33520"/>
</dbReference>
<dbReference type="GeneID" id="817917"/>
<dbReference type="Gramene" id="AT2G33520.1">
    <property type="protein sequence ID" value="AT2G33520.1"/>
    <property type="gene ID" value="AT2G33520"/>
</dbReference>
<dbReference type="KEGG" id="ath:AT2G33520"/>
<dbReference type="Araport" id="AT2G33520"/>
<dbReference type="TAIR" id="AT2G33520">
    <property type="gene designation" value="ATHCYSTM7"/>
</dbReference>
<dbReference type="HOGENOM" id="CLU_183260_0_0_1"/>
<dbReference type="InParanoid" id="O22802"/>
<dbReference type="OMA" id="NAWIYHY"/>
<dbReference type="PRO" id="PR:O22802"/>
<dbReference type="Proteomes" id="UP000006548">
    <property type="component" value="Chromosome 2"/>
</dbReference>
<dbReference type="GO" id="GO:0005886">
    <property type="term" value="C:plasma membrane"/>
    <property type="evidence" value="ECO:0000314"/>
    <property type="project" value="UniProtKB"/>
</dbReference>
<dbReference type="GO" id="GO:0042803">
    <property type="term" value="F:protein homodimerization activity"/>
    <property type="evidence" value="ECO:0000314"/>
    <property type="project" value="UniProtKB"/>
</dbReference>
<comment type="function">
    <text evidence="4">Involved in resistance to abiotic stress.</text>
</comment>
<comment type="subunit">
    <text evidence="3">Homodimer and heterodimers (PubMed:29272523). Interacts with CYSTM3, CYSTM4, CYSTM5, CYSTM6, CYSTM10, WIH1/CYSTM13 and CYSTM11 (PubMed:29272523). Binds weakly to CYSTM1, CYSTM2 and CYSTM12 (PubMed:29272523).</text>
</comment>
<comment type="subcellular location">
    <subcellularLocation>
        <location evidence="3">Cell membrane</location>
        <topology evidence="1">Single-pass membrane protein</topology>
    </subcellularLocation>
</comment>
<comment type="tissue specificity">
    <text evidence="3">Mostly expressed in siliques and, to a lower extent, in stems, roots, leaves and flowers.</text>
</comment>
<comment type="induction">
    <text evidence="3">Induced by salt, heat and drought.</text>
</comment>
<comment type="similarity">
    <text evidence="5">Belongs to the CYSTM1 family.</text>
</comment>
<accession>O22802</accession>
<organism>
    <name type="scientific">Arabidopsis thaliana</name>
    <name type="common">Mouse-ear cress</name>
    <dbReference type="NCBI Taxonomy" id="3702"/>
    <lineage>
        <taxon>Eukaryota</taxon>
        <taxon>Viridiplantae</taxon>
        <taxon>Streptophyta</taxon>
        <taxon>Embryophyta</taxon>
        <taxon>Tracheophyta</taxon>
        <taxon>Spermatophyta</taxon>
        <taxon>Magnoliopsida</taxon>
        <taxon>eudicotyledons</taxon>
        <taxon>Gunneridae</taxon>
        <taxon>Pentapetalae</taxon>
        <taxon>rosids</taxon>
        <taxon>malvids</taxon>
        <taxon>Brassicales</taxon>
        <taxon>Brassicaceae</taxon>
        <taxon>Camelineae</taxon>
        <taxon>Arabidopsis</taxon>
    </lineage>
</organism>
<keyword id="KW-1003">Cell membrane</keyword>
<keyword id="KW-0472">Membrane</keyword>
<keyword id="KW-1185">Reference proteome</keyword>
<keyword id="KW-0812">Transmembrane</keyword>
<keyword id="KW-1133">Transmembrane helix</keyword>
<feature type="chain" id="PRO_0000454804" description="Protein CYSTEINE-RICH TRANSMEMBRANE MODULE 7">
    <location>
        <begin position="1"/>
        <end position="97"/>
    </location>
</feature>
<feature type="transmembrane region" description="Helical" evidence="1">
    <location>
        <begin position="68"/>
        <end position="88"/>
    </location>
</feature>
<feature type="region of interest" description="Disordered" evidence="2">
    <location>
        <begin position="1"/>
        <end position="27"/>
    </location>
</feature>
<feature type="compositionally biased region" description="Pro residues" evidence="2">
    <location>
        <begin position="15"/>
        <end position="27"/>
    </location>
</feature>
<gene>
    <name evidence="4" type="primary">CYSTM7</name>
    <name evidence="6" type="ordered locus">At2g33520</name>
    <name evidence="7" type="ORF">F4P9.29</name>
</gene>